<organism>
    <name type="scientific">Aliarcobacter butzleri (strain RM4018)</name>
    <name type="common">Arcobacter butzleri</name>
    <dbReference type="NCBI Taxonomy" id="367737"/>
    <lineage>
        <taxon>Bacteria</taxon>
        <taxon>Pseudomonadati</taxon>
        <taxon>Campylobacterota</taxon>
        <taxon>Epsilonproteobacteria</taxon>
        <taxon>Campylobacterales</taxon>
        <taxon>Arcobacteraceae</taxon>
        <taxon>Aliarcobacter</taxon>
    </lineage>
</organism>
<gene>
    <name evidence="1" type="primary">tgt</name>
    <name type="ordered locus">Abu_0230</name>
</gene>
<comment type="function">
    <text evidence="1">Catalyzes the base-exchange of a guanine (G) residue with the queuine precursor 7-aminomethyl-7-deazaguanine (PreQ1) at position 34 (anticodon wobble position) in tRNAs with GU(N) anticodons (tRNA-Asp, -Asn, -His and -Tyr). Catalysis occurs through a double-displacement mechanism. The nucleophile active site attacks the C1' of nucleotide 34 to detach the guanine base from the RNA, forming a covalent enzyme-RNA intermediate. The proton acceptor active site deprotonates the incoming PreQ1, allowing a nucleophilic attack on the C1' of the ribose to form the product. After dissociation, two additional enzymatic reactions on the tRNA convert PreQ1 to queuine (Q), resulting in the hypermodified nucleoside queuosine (7-(((4,5-cis-dihydroxy-2-cyclopenten-1-yl)amino)methyl)-7-deazaguanosine).</text>
</comment>
<comment type="catalytic activity">
    <reaction evidence="1">
        <text>7-aminomethyl-7-carbaguanine + guanosine(34) in tRNA = 7-aminomethyl-7-carbaguanosine(34) in tRNA + guanine</text>
        <dbReference type="Rhea" id="RHEA:24104"/>
        <dbReference type="Rhea" id="RHEA-COMP:10341"/>
        <dbReference type="Rhea" id="RHEA-COMP:10342"/>
        <dbReference type="ChEBI" id="CHEBI:16235"/>
        <dbReference type="ChEBI" id="CHEBI:58703"/>
        <dbReference type="ChEBI" id="CHEBI:74269"/>
        <dbReference type="ChEBI" id="CHEBI:82833"/>
        <dbReference type="EC" id="2.4.2.29"/>
    </reaction>
</comment>
<comment type="cofactor">
    <cofactor evidence="1">
        <name>Zn(2+)</name>
        <dbReference type="ChEBI" id="CHEBI:29105"/>
    </cofactor>
    <text evidence="1">Binds 1 zinc ion per subunit.</text>
</comment>
<comment type="pathway">
    <text evidence="1">tRNA modification; tRNA-queuosine biosynthesis.</text>
</comment>
<comment type="subunit">
    <text evidence="1">Homodimer. Within each dimer, one monomer is responsible for RNA recognition and catalysis, while the other monomer binds to the replacement base PreQ1.</text>
</comment>
<comment type="similarity">
    <text evidence="1">Belongs to the queuine tRNA-ribosyltransferase family.</text>
</comment>
<sequence>MEFKIDGTSQGARACTIKTAHSTILTPVFMPVGTQGTVKALDANDMLELGAKIILGNTYHLYLRPGSKLIKKFGGLHGFSKFPNSFLTDSGGFQAFSLSNNSKPDENGITFKSHIDGSRHYFTPKSVLDTQYDLNSDIMMILDDLVALPNTDERIKTSIQRTTKWAQEAINYHMEQKQKGIGTHQNIFAIIQGGTSKEFRKLSAQQLCDMSDFDGFAIGGLSVGEPNEQMYETVEWTTQFMPKDKPRYLMGVGTPEDLIENIERGVDMFDCVMPTRNARNGTLFTSFGKLNIKKAEFKDDANPIDNECSCYTCKNFSRAYLNHLFRAAEITYFRLASIHNIHYYLNLMKQAREAILADNWSEFKKEFYVKRSK</sequence>
<dbReference type="EC" id="2.4.2.29" evidence="1"/>
<dbReference type="EMBL" id="CP000361">
    <property type="protein sequence ID" value="ABV66505.1"/>
    <property type="molecule type" value="Genomic_DNA"/>
</dbReference>
<dbReference type="RefSeq" id="WP_012012098.1">
    <property type="nucleotide sequence ID" value="NC_009850.1"/>
</dbReference>
<dbReference type="SMR" id="A8ERD1"/>
<dbReference type="STRING" id="367737.Abu_0230"/>
<dbReference type="GeneID" id="24305413"/>
<dbReference type="KEGG" id="abu:Abu_0230"/>
<dbReference type="eggNOG" id="COG0343">
    <property type="taxonomic scope" value="Bacteria"/>
</dbReference>
<dbReference type="HOGENOM" id="CLU_022060_0_1_7"/>
<dbReference type="UniPathway" id="UPA00392"/>
<dbReference type="Proteomes" id="UP000001136">
    <property type="component" value="Chromosome"/>
</dbReference>
<dbReference type="GO" id="GO:0005829">
    <property type="term" value="C:cytosol"/>
    <property type="evidence" value="ECO:0007669"/>
    <property type="project" value="TreeGrafter"/>
</dbReference>
<dbReference type="GO" id="GO:0046872">
    <property type="term" value="F:metal ion binding"/>
    <property type="evidence" value="ECO:0007669"/>
    <property type="project" value="UniProtKB-KW"/>
</dbReference>
<dbReference type="GO" id="GO:0008479">
    <property type="term" value="F:tRNA-guanosine(34) queuine transglycosylase activity"/>
    <property type="evidence" value="ECO:0007669"/>
    <property type="project" value="UniProtKB-UniRule"/>
</dbReference>
<dbReference type="GO" id="GO:0008616">
    <property type="term" value="P:queuosine biosynthetic process"/>
    <property type="evidence" value="ECO:0007669"/>
    <property type="project" value="UniProtKB-UniRule"/>
</dbReference>
<dbReference type="GO" id="GO:0101030">
    <property type="term" value="P:tRNA-guanine transglycosylation"/>
    <property type="evidence" value="ECO:0007669"/>
    <property type="project" value="InterPro"/>
</dbReference>
<dbReference type="FunFam" id="3.20.20.105:FF:000001">
    <property type="entry name" value="Queuine tRNA-ribosyltransferase"/>
    <property type="match status" value="1"/>
</dbReference>
<dbReference type="Gene3D" id="3.20.20.105">
    <property type="entry name" value="Queuine tRNA-ribosyltransferase-like"/>
    <property type="match status" value="1"/>
</dbReference>
<dbReference type="HAMAP" id="MF_00168">
    <property type="entry name" value="Q_tRNA_Tgt"/>
    <property type="match status" value="1"/>
</dbReference>
<dbReference type="InterPro" id="IPR004803">
    <property type="entry name" value="TGT"/>
</dbReference>
<dbReference type="InterPro" id="IPR036511">
    <property type="entry name" value="TGT-like_sf"/>
</dbReference>
<dbReference type="InterPro" id="IPR002616">
    <property type="entry name" value="tRNA_ribo_trans-like"/>
</dbReference>
<dbReference type="NCBIfam" id="TIGR00430">
    <property type="entry name" value="Q_tRNA_tgt"/>
    <property type="match status" value="1"/>
</dbReference>
<dbReference type="NCBIfam" id="TIGR00449">
    <property type="entry name" value="tgt_general"/>
    <property type="match status" value="1"/>
</dbReference>
<dbReference type="PANTHER" id="PTHR43530">
    <property type="entry name" value="QUEUINE TRNA-RIBOSYLTRANSFERASE CATALYTIC SUBUNIT 1"/>
    <property type="match status" value="1"/>
</dbReference>
<dbReference type="PANTHER" id="PTHR43530:SF1">
    <property type="entry name" value="QUEUINE TRNA-RIBOSYLTRANSFERASE CATALYTIC SUBUNIT 1"/>
    <property type="match status" value="1"/>
</dbReference>
<dbReference type="Pfam" id="PF01702">
    <property type="entry name" value="TGT"/>
    <property type="match status" value="1"/>
</dbReference>
<dbReference type="SUPFAM" id="SSF51713">
    <property type="entry name" value="tRNA-guanine transglycosylase"/>
    <property type="match status" value="1"/>
</dbReference>
<name>TGT_ALIB4</name>
<protein>
    <recommendedName>
        <fullName evidence="1">Queuine tRNA-ribosyltransferase</fullName>
        <ecNumber evidence="1">2.4.2.29</ecNumber>
    </recommendedName>
    <alternativeName>
        <fullName evidence="1">Guanine insertion enzyme</fullName>
    </alternativeName>
    <alternativeName>
        <fullName evidence="1">tRNA-guanine transglycosylase</fullName>
    </alternativeName>
</protein>
<feature type="chain" id="PRO_1000058276" description="Queuine tRNA-ribosyltransferase">
    <location>
        <begin position="1"/>
        <end position="373"/>
    </location>
</feature>
<feature type="region of interest" description="RNA binding" evidence="1">
    <location>
        <begin position="251"/>
        <end position="257"/>
    </location>
</feature>
<feature type="region of interest" description="RNA binding; important for wobble base 34 recognition" evidence="1">
    <location>
        <begin position="275"/>
        <end position="279"/>
    </location>
</feature>
<feature type="active site" description="Proton acceptor" evidence="1">
    <location>
        <position position="89"/>
    </location>
</feature>
<feature type="active site" description="Nucleophile" evidence="1">
    <location>
        <position position="270"/>
    </location>
</feature>
<feature type="binding site" evidence="1">
    <location>
        <begin position="89"/>
        <end position="93"/>
    </location>
    <ligand>
        <name>substrate</name>
    </ligand>
</feature>
<feature type="binding site" evidence="1">
    <location>
        <position position="143"/>
    </location>
    <ligand>
        <name>substrate</name>
    </ligand>
</feature>
<feature type="binding site" evidence="1">
    <location>
        <position position="192"/>
    </location>
    <ligand>
        <name>substrate</name>
    </ligand>
</feature>
<feature type="binding site" evidence="1">
    <location>
        <position position="220"/>
    </location>
    <ligand>
        <name>substrate</name>
    </ligand>
</feature>
<feature type="binding site" evidence="1">
    <location>
        <position position="308"/>
    </location>
    <ligand>
        <name>Zn(2+)</name>
        <dbReference type="ChEBI" id="CHEBI:29105"/>
    </ligand>
</feature>
<feature type="binding site" evidence="1">
    <location>
        <position position="310"/>
    </location>
    <ligand>
        <name>Zn(2+)</name>
        <dbReference type="ChEBI" id="CHEBI:29105"/>
    </ligand>
</feature>
<feature type="binding site" evidence="1">
    <location>
        <position position="313"/>
    </location>
    <ligand>
        <name>Zn(2+)</name>
        <dbReference type="ChEBI" id="CHEBI:29105"/>
    </ligand>
</feature>
<feature type="binding site" evidence="1">
    <location>
        <position position="339"/>
    </location>
    <ligand>
        <name>Zn(2+)</name>
        <dbReference type="ChEBI" id="CHEBI:29105"/>
    </ligand>
</feature>
<accession>A8ERD1</accession>
<reference key="1">
    <citation type="journal article" date="2007" name="PLoS ONE">
        <title>The complete genome sequence and analysis of the Epsilonproteobacterium Arcobacter butzleri.</title>
        <authorList>
            <person name="Miller W.G."/>
            <person name="Parker C.T."/>
            <person name="Rubenfield M."/>
            <person name="Mendz G.L."/>
            <person name="Woesten M.M.S.M."/>
            <person name="Ussery D.W."/>
            <person name="Stolz J.F."/>
            <person name="Binnewies T.T."/>
            <person name="Hallin P.F."/>
            <person name="Wang G."/>
            <person name="Malek J.A."/>
            <person name="Rogosin A."/>
            <person name="Stanker L.H."/>
            <person name="Mandrell R.E."/>
        </authorList>
    </citation>
    <scope>NUCLEOTIDE SEQUENCE [LARGE SCALE GENOMIC DNA]</scope>
    <source>
        <strain>RM4018</strain>
    </source>
</reference>
<evidence type="ECO:0000255" key="1">
    <source>
        <dbReference type="HAMAP-Rule" id="MF_00168"/>
    </source>
</evidence>
<proteinExistence type="inferred from homology"/>
<keyword id="KW-0328">Glycosyltransferase</keyword>
<keyword id="KW-0479">Metal-binding</keyword>
<keyword id="KW-0671">Queuosine biosynthesis</keyword>
<keyword id="KW-1185">Reference proteome</keyword>
<keyword id="KW-0808">Transferase</keyword>
<keyword id="KW-0819">tRNA processing</keyword>
<keyword id="KW-0862">Zinc</keyword>